<evidence type="ECO:0000255" key="1"/>
<evidence type="ECO:0000255" key="2">
    <source>
        <dbReference type="PROSITE-ProRule" id="PRU00040"/>
    </source>
</evidence>
<evidence type="ECO:0000269" key="3">
    <source>
    </source>
</evidence>
<evidence type="ECO:0000269" key="4">
    <source>
    </source>
</evidence>
<evidence type="ECO:0000269" key="5">
    <source>
    </source>
</evidence>
<evidence type="ECO:0000269" key="6">
    <source>
    </source>
</evidence>
<evidence type="ECO:0000269" key="7">
    <source>
    </source>
</evidence>
<evidence type="ECO:0000269" key="8">
    <source>
    </source>
</evidence>
<evidence type="ECO:0000269" key="9">
    <source>
    </source>
</evidence>
<evidence type="ECO:0000269" key="10">
    <source>
    </source>
</evidence>
<evidence type="ECO:0007829" key="11">
    <source>
        <dbReference type="PDB" id="4AK8"/>
    </source>
</evidence>
<evidence type="ECO:0007829" key="12">
    <source>
        <dbReference type="PDB" id="7YTQ"/>
    </source>
</evidence>
<organism>
    <name type="scientific">Homo sapiens</name>
    <name type="common">Human</name>
    <dbReference type="NCBI Taxonomy" id="9606"/>
    <lineage>
        <taxon>Eukaryota</taxon>
        <taxon>Metazoa</taxon>
        <taxon>Chordata</taxon>
        <taxon>Craniata</taxon>
        <taxon>Vertebrata</taxon>
        <taxon>Euteleostomi</taxon>
        <taxon>Mammalia</taxon>
        <taxon>Eutheria</taxon>
        <taxon>Euarchontoglires</taxon>
        <taxon>Primates</taxon>
        <taxon>Haplorrhini</taxon>
        <taxon>Catarrhini</taxon>
        <taxon>Hominidae</taxon>
        <taxon>Homo</taxon>
    </lineage>
</organism>
<dbReference type="EMBL" id="AJ242859">
    <property type="protein sequence ID" value="CAB62403.1"/>
    <property type="molecule type" value="mRNA"/>
</dbReference>
<dbReference type="EMBL" id="AC007395">
    <property type="status" value="NOT_ANNOTATED_CDS"/>
    <property type="molecule type" value="Genomic_DNA"/>
</dbReference>
<dbReference type="EMBL" id="BC022278">
    <property type="protein sequence ID" value="AAH22278.1"/>
    <property type="molecule type" value="mRNA"/>
</dbReference>
<dbReference type="CCDS" id="CCDS74520.1"/>
<dbReference type="RefSeq" id="NP_056532.4">
    <property type="nucleotide sequence ID" value="NM_015717.5"/>
</dbReference>
<dbReference type="RefSeq" id="XP_011531176.1">
    <property type="nucleotide sequence ID" value="XM_011532874.1"/>
</dbReference>
<dbReference type="PDB" id="3C22">
    <property type="method" value="X-ray"/>
    <property type="resolution" value="1.50 A"/>
    <property type="chains" value="A/B/C/D=188-328"/>
</dbReference>
<dbReference type="PDB" id="3KQG">
    <property type="method" value="X-ray"/>
    <property type="resolution" value="2.30 A"/>
    <property type="chains" value="A/B/C/D/E/F=147-328"/>
</dbReference>
<dbReference type="PDB" id="3P5D">
    <property type="method" value="X-ray"/>
    <property type="resolution" value="1.80 A"/>
    <property type="chains" value="A/B/C/D=193-328"/>
</dbReference>
<dbReference type="PDB" id="3P5E">
    <property type="method" value="X-ray"/>
    <property type="resolution" value="1.70 A"/>
    <property type="chains" value="A/B/C/D=193-328"/>
</dbReference>
<dbReference type="PDB" id="3P5F">
    <property type="method" value="X-ray"/>
    <property type="resolution" value="1.75 A"/>
    <property type="chains" value="A/B/C/D=193-328"/>
</dbReference>
<dbReference type="PDB" id="3P5G">
    <property type="method" value="X-ray"/>
    <property type="resolution" value="1.60 A"/>
    <property type="chains" value="A/B/C/D=193-328"/>
</dbReference>
<dbReference type="PDB" id="3P5H">
    <property type="method" value="X-ray"/>
    <property type="resolution" value="1.61 A"/>
    <property type="chains" value="A/B/C/D=193-328"/>
</dbReference>
<dbReference type="PDB" id="3P5I">
    <property type="method" value="X-ray"/>
    <property type="resolution" value="1.80 A"/>
    <property type="chains" value="A/B/C/D=193-328"/>
</dbReference>
<dbReference type="PDB" id="3P7F">
    <property type="method" value="X-ray"/>
    <property type="resolution" value="2.50 A"/>
    <property type="chains" value="A/B/C/D=193-328"/>
</dbReference>
<dbReference type="PDB" id="3P7G">
    <property type="method" value="X-ray"/>
    <property type="resolution" value="1.60 A"/>
    <property type="chains" value="A/B/C/D=193-328"/>
</dbReference>
<dbReference type="PDB" id="3P7H">
    <property type="method" value="X-ray"/>
    <property type="resolution" value="2.30 A"/>
    <property type="chains" value="A/B/C/D=193-328"/>
</dbReference>
<dbReference type="PDB" id="4AK8">
    <property type="method" value="X-ray"/>
    <property type="resolution" value="1.40 A"/>
    <property type="chains" value="A/B/C/D=188-328"/>
</dbReference>
<dbReference type="PDB" id="4N32">
    <property type="method" value="X-ray"/>
    <property type="resolution" value="1.75 A"/>
    <property type="chains" value="A/B/C/D=193-328"/>
</dbReference>
<dbReference type="PDB" id="4N33">
    <property type="method" value="X-ray"/>
    <property type="resolution" value="1.85 A"/>
    <property type="chains" value="A/B/C/D=193-328"/>
</dbReference>
<dbReference type="PDB" id="4N34">
    <property type="method" value="X-ray"/>
    <property type="resolution" value="1.75 A"/>
    <property type="chains" value="A/B/C/D=193-328"/>
</dbReference>
<dbReference type="PDB" id="4N35">
    <property type="method" value="X-ray"/>
    <property type="resolution" value="1.85 A"/>
    <property type="chains" value="A/B/C/D=193-328"/>
</dbReference>
<dbReference type="PDB" id="4N36">
    <property type="method" value="X-ray"/>
    <property type="resolution" value="1.85 A"/>
    <property type="chains" value="A/B/C/D=193-328"/>
</dbReference>
<dbReference type="PDB" id="4N37">
    <property type="method" value="X-ray"/>
    <property type="resolution" value="2.00 A"/>
    <property type="chains" value="A/B/C/D=193-328"/>
</dbReference>
<dbReference type="PDB" id="4N38">
    <property type="method" value="X-ray"/>
    <property type="resolution" value="2.00 A"/>
    <property type="chains" value="A/B/C/D=193-328"/>
</dbReference>
<dbReference type="PDB" id="5G6U">
    <property type="method" value="X-ray"/>
    <property type="resolution" value="1.84 A"/>
    <property type="chains" value="A/B/C/D=68-328"/>
</dbReference>
<dbReference type="PDB" id="7WZ8">
    <property type="method" value="EM"/>
    <property type="resolution" value="6.40 A"/>
    <property type="chains" value="A/B/C/D/E/F=2-328"/>
</dbReference>
<dbReference type="PDB" id="7YTQ">
    <property type="method" value="X-ray"/>
    <property type="resolution" value="1.60 A"/>
    <property type="chains" value="A/B/C/D=188-328"/>
</dbReference>
<dbReference type="PDBsum" id="3C22"/>
<dbReference type="PDBsum" id="3KQG"/>
<dbReference type="PDBsum" id="3P5D"/>
<dbReference type="PDBsum" id="3P5E"/>
<dbReference type="PDBsum" id="3P5F"/>
<dbReference type="PDBsum" id="3P5G"/>
<dbReference type="PDBsum" id="3P5H"/>
<dbReference type="PDBsum" id="3P5I"/>
<dbReference type="PDBsum" id="3P7F"/>
<dbReference type="PDBsum" id="3P7G"/>
<dbReference type="PDBsum" id="3P7H"/>
<dbReference type="PDBsum" id="4AK8"/>
<dbReference type="PDBsum" id="4N32"/>
<dbReference type="PDBsum" id="4N33"/>
<dbReference type="PDBsum" id="4N34"/>
<dbReference type="PDBsum" id="4N35"/>
<dbReference type="PDBsum" id="4N36"/>
<dbReference type="PDBsum" id="4N37"/>
<dbReference type="PDBsum" id="4N38"/>
<dbReference type="PDBsum" id="5G6U"/>
<dbReference type="PDBsum" id="7WZ8"/>
<dbReference type="PDBsum" id="7YTQ"/>
<dbReference type="EMDB" id="EMD-32906"/>
<dbReference type="SMR" id="Q9UJ71"/>
<dbReference type="BioGRID" id="119076">
    <property type="interactions" value="25"/>
</dbReference>
<dbReference type="FunCoup" id="Q9UJ71">
    <property type="interactions" value="164"/>
</dbReference>
<dbReference type="IntAct" id="Q9UJ71">
    <property type="interactions" value="23"/>
</dbReference>
<dbReference type="STRING" id="9606.ENSP00000386378"/>
<dbReference type="BindingDB" id="Q9UJ71"/>
<dbReference type="ChEMBL" id="CHEMBL2176853"/>
<dbReference type="UniLectin" id="Q9UJ71"/>
<dbReference type="GlyCosmos" id="Q9UJ71">
    <property type="glycosylation" value="3 sites, No reported glycans"/>
</dbReference>
<dbReference type="GlyGen" id="Q9UJ71">
    <property type="glycosylation" value="6 sites, 2 N-linked glycans (2 sites)"/>
</dbReference>
<dbReference type="iPTMnet" id="Q9UJ71"/>
<dbReference type="PhosphoSitePlus" id="Q9UJ71"/>
<dbReference type="BioMuta" id="CD207"/>
<dbReference type="DMDM" id="229784129"/>
<dbReference type="jPOST" id="Q9UJ71"/>
<dbReference type="MassIVE" id="Q9UJ71"/>
<dbReference type="PaxDb" id="9606-ENSP00000386378"/>
<dbReference type="PeptideAtlas" id="Q9UJ71"/>
<dbReference type="ProteomicsDB" id="84594"/>
<dbReference type="Antibodypedia" id="2366">
    <property type="antibodies" value="573 antibodies from 36 providers"/>
</dbReference>
<dbReference type="DNASU" id="50489"/>
<dbReference type="Ensembl" id="ENST00000410009.5">
    <property type="protein sequence ID" value="ENSP00000386378.3"/>
    <property type="gene ID" value="ENSG00000116031.9"/>
</dbReference>
<dbReference type="GeneID" id="50489"/>
<dbReference type="KEGG" id="hsa:50489"/>
<dbReference type="MANE-Select" id="ENST00000410009.5">
    <property type="protein sequence ID" value="ENSP00000386378.3"/>
    <property type="RefSeq nucleotide sequence ID" value="NM_015717.5"/>
    <property type="RefSeq protein sequence ID" value="NP_056532.4"/>
</dbReference>
<dbReference type="UCSC" id="uc002shg.4">
    <property type="organism name" value="human"/>
</dbReference>
<dbReference type="AGR" id="HGNC:17935"/>
<dbReference type="CTD" id="50489"/>
<dbReference type="DisGeNET" id="50489"/>
<dbReference type="GeneCards" id="CD207"/>
<dbReference type="HGNC" id="HGNC:17935">
    <property type="gene designation" value="CD207"/>
</dbReference>
<dbReference type="HPA" id="ENSG00000116031">
    <property type="expression patterns" value="Tissue enriched (skin)"/>
</dbReference>
<dbReference type="MalaCards" id="CD207"/>
<dbReference type="MIM" id="604862">
    <property type="type" value="gene"/>
</dbReference>
<dbReference type="MIM" id="613393">
    <property type="type" value="phenotype"/>
</dbReference>
<dbReference type="neXtProt" id="NX_Q9UJ71"/>
<dbReference type="OpenTargets" id="ENSG00000116031"/>
<dbReference type="PharmGKB" id="PA134986203"/>
<dbReference type="VEuPathDB" id="HostDB:ENSG00000116031"/>
<dbReference type="eggNOG" id="KOG4297">
    <property type="taxonomic scope" value="Eukaryota"/>
</dbReference>
<dbReference type="GeneTree" id="ENSGT00940000161863"/>
<dbReference type="HOGENOM" id="CLU_081746_0_0_1"/>
<dbReference type="InParanoid" id="Q9UJ71"/>
<dbReference type="OMA" id="WYSAEQF"/>
<dbReference type="OrthoDB" id="2142683at2759"/>
<dbReference type="PAN-GO" id="Q9UJ71">
    <property type="GO annotations" value="3 GO annotations based on evolutionary models"/>
</dbReference>
<dbReference type="PhylomeDB" id="Q9UJ71"/>
<dbReference type="TreeFam" id="TF333341"/>
<dbReference type="PathwayCommons" id="Q9UJ71"/>
<dbReference type="Reactome" id="R-HSA-1236978">
    <property type="pathway name" value="Cross-presentation of soluble exogenous antigens (endosomes)"/>
</dbReference>
<dbReference type="SignaLink" id="Q9UJ71"/>
<dbReference type="BioGRID-ORCS" id="50489">
    <property type="hits" value="11 hits in 392 CRISPR screens"/>
</dbReference>
<dbReference type="EvolutionaryTrace" id="Q9UJ71"/>
<dbReference type="GeneWiki" id="Langerin"/>
<dbReference type="GenomeRNAi" id="50489"/>
<dbReference type="Pharos" id="Q9UJ71">
    <property type="development level" value="Tbio"/>
</dbReference>
<dbReference type="PRO" id="PR:Q9UJ71"/>
<dbReference type="Proteomes" id="UP000005640">
    <property type="component" value="Chromosome 2"/>
</dbReference>
<dbReference type="RNAct" id="Q9UJ71">
    <property type="molecule type" value="protein"/>
</dbReference>
<dbReference type="Bgee" id="ENSG00000116031">
    <property type="expression patterns" value="Expressed in upper leg skin and 88 other cell types or tissues"/>
</dbReference>
<dbReference type="GO" id="GO:0030669">
    <property type="term" value="C:clathrin-coated endocytic vesicle membrane"/>
    <property type="evidence" value="ECO:0000304"/>
    <property type="project" value="Reactome"/>
</dbReference>
<dbReference type="GO" id="GO:0031901">
    <property type="term" value="C:early endosome membrane"/>
    <property type="evidence" value="ECO:0000304"/>
    <property type="project" value="Reactome"/>
</dbReference>
<dbReference type="GO" id="GO:0030139">
    <property type="term" value="C:endocytic vesicle"/>
    <property type="evidence" value="ECO:0000304"/>
    <property type="project" value="ProtInc"/>
</dbReference>
<dbReference type="GO" id="GO:0009897">
    <property type="term" value="C:external side of plasma membrane"/>
    <property type="evidence" value="ECO:0000318"/>
    <property type="project" value="GO_Central"/>
</dbReference>
<dbReference type="GO" id="GO:0005886">
    <property type="term" value="C:plasma membrane"/>
    <property type="evidence" value="ECO:0000304"/>
    <property type="project" value="Reactome"/>
</dbReference>
<dbReference type="GO" id="GO:0030246">
    <property type="term" value="F:carbohydrate binding"/>
    <property type="evidence" value="ECO:0000314"/>
    <property type="project" value="UniProtKB"/>
</dbReference>
<dbReference type="GO" id="GO:0005537">
    <property type="term" value="F:D-mannose binding"/>
    <property type="evidence" value="ECO:0000304"/>
    <property type="project" value="ProtInc"/>
</dbReference>
<dbReference type="GO" id="GO:0038187">
    <property type="term" value="F:pattern recognition receptor activity"/>
    <property type="evidence" value="ECO:0000318"/>
    <property type="project" value="GO_Central"/>
</dbReference>
<dbReference type="GO" id="GO:0051607">
    <property type="term" value="P:defense response to virus"/>
    <property type="evidence" value="ECO:0000314"/>
    <property type="project" value="UniProtKB"/>
</dbReference>
<dbReference type="GO" id="GO:0006955">
    <property type="term" value="P:immune response"/>
    <property type="evidence" value="ECO:0000318"/>
    <property type="project" value="GO_Central"/>
</dbReference>
<dbReference type="CDD" id="cd03590">
    <property type="entry name" value="CLECT_DC-SIGN_like"/>
    <property type="match status" value="1"/>
</dbReference>
<dbReference type="FunFam" id="3.10.100.10:FF:000115">
    <property type="entry name" value="C-type lectin domain family 4 member K"/>
    <property type="match status" value="1"/>
</dbReference>
<dbReference type="FunFam" id="1.20.5.170:FF:000091">
    <property type="entry name" value="CD207 isoform 1"/>
    <property type="match status" value="1"/>
</dbReference>
<dbReference type="Gene3D" id="1.20.5.170">
    <property type="match status" value="1"/>
</dbReference>
<dbReference type="Gene3D" id="3.10.100.10">
    <property type="entry name" value="Mannose-Binding Protein A, subunit A"/>
    <property type="match status" value="1"/>
</dbReference>
<dbReference type="InterPro" id="IPR001304">
    <property type="entry name" value="C-type_lectin-like"/>
</dbReference>
<dbReference type="InterPro" id="IPR016186">
    <property type="entry name" value="C-type_lectin-like/link_sf"/>
</dbReference>
<dbReference type="InterPro" id="IPR050111">
    <property type="entry name" value="C-type_lectin/snaclec_domain"/>
</dbReference>
<dbReference type="InterPro" id="IPR018378">
    <property type="entry name" value="C-type_lectin_CS"/>
</dbReference>
<dbReference type="InterPro" id="IPR033989">
    <property type="entry name" value="CD209-like_CTLD"/>
</dbReference>
<dbReference type="InterPro" id="IPR016187">
    <property type="entry name" value="CTDL_fold"/>
</dbReference>
<dbReference type="PANTHER" id="PTHR22803">
    <property type="entry name" value="MANNOSE, PHOSPHOLIPASE, LECTIN RECEPTOR RELATED"/>
    <property type="match status" value="1"/>
</dbReference>
<dbReference type="Pfam" id="PF00059">
    <property type="entry name" value="Lectin_C"/>
    <property type="match status" value="1"/>
</dbReference>
<dbReference type="SMART" id="SM00034">
    <property type="entry name" value="CLECT"/>
    <property type="match status" value="1"/>
</dbReference>
<dbReference type="SUPFAM" id="SSF56436">
    <property type="entry name" value="C-type lectin-like"/>
    <property type="match status" value="1"/>
</dbReference>
<dbReference type="PROSITE" id="PS00615">
    <property type="entry name" value="C_TYPE_LECTIN_1"/>
    <property type="match status" value="1"/>
</dbReference>
<dbReference type="PROSITE" id="PS50041">
    <property type="entry name" value="C_TYPE_LECTIN_2"/>
    <property type="match status" value="1"/>
</dbReference>
<comment type="function">
    <text evidence="3 7 9 10">Calcium-dependent lectin displaying mannose-binding specificity. Induces the formation of Birbeck granules (BGs); is a potent regulator of membrane superimposition and zippering. Binds to sulfated as well as mannosylated glycans, keratan sulfate (KS) and beta-glucans. Facilitates uptake of antigens and is involved in the routing and/or processing of antigen for presentation to T cells. Major receptor on primary Langerhans cells for Candida species, Saccharomyces species, and Malassezia furfur. Protects against human immunodeficiency virus-1 (HIV-1) infection. Binds to high-mannose structures present on the envelope glycoprotein which is followed by subsequent targeting of the virus to the Birbeck granules leading to its rapid degradation.</text>
</comment>
<comment type="subunit">
    <text evidence="4">Homotrimer.</text>
</comment>
<comment type="interaction">
    <interactant intactId="EBI-2873235">
        <id>Q9UJ71</id>
    </interactant>
    <interactant intactId="EBI-625022">
        <id>O43889-2</id>
        <label>CREB3</label>
    </interactant>
    <organismsDiffer>false</organismsDiffer>
    <experiments>3</experiments>
</comment>
<comment type="interaction">
    <interactant intactId="EBI-2873235">
        <id>Q9UJ71</id>
    </interactant>
    <interactant intactId="EBI-781551">
        <id>Q9Y282</id>
        <label>ERGIC3</label>
    </interactant>
    <organismsDiffer>false</organismsDiffer>
    <experiments>3</experiments>
</comment>
<comment type="interaction">
    <interactant intactId="EBI-2873235">
        <id>Q9UJ71</id>
    </interactant>
    <interactant intactId="EBI-2832937">
        <id>Q96HH9</id>
        <label>GRAMD2B</label>
    </interactant>
    <organismsDiffer>false</organismsDiffer>
    <experiments>6</experiments>
</comment>
<comment type="interaction">
    <interactant intactId="EBI-2873235">
        <id>Q9UJ71</id>
    </interactant>
    <interactant intactId="EBI-2684237">
        <id>O00767</id>
        <label>SCD</label>
    </interactant>
    <organismsDiffer>false</organismsDiffer>
    <experiments>3</experiments>
</comment>
<comment type="interaction">
    <interactant intactId="EBI-2873235">
        <id>Q9UJ71</id>
    </interactant>
    <interactant intactId="EBI-8652744">
        <id>Q96IW7</id>
        <label>SEC22A</label>
    </interactant>
    <organismsDiffer>false</organismsDiffer>
    <experiments>3</experiments>
</comment>
<comment type="interaction">
    <interactant intactId="EBI-2873235">
        <id>Q9UJ71</id>
    </interactant>
    <interactant intactId="EBI-748373">
        <id>Q6PEW1</id>
        <label>ZCCHC12</label>
    </interactant>
    <organismsDiffer>false</organismsDiffer>
    <experiments>3</experiments>
</comment>
<comment type="subcellular location">
    <subcellularLocation>
        <location evidence="3">Membrane</location>
        <topology evidence="3">Single-pass type II membrane protein</topology>
    </subcellularLocation>
    <text>Found in Birbeck granules (BGs), which are organelles consisting of superimposed and zippered membranes.</text>
</comment>
<comment type="tissue specificity">
    <text evidence="3 9">Exclusively expressed by Langerhans cells. Expressed in astrocytoma and malignant ependymoma, but not in normal brain tissues.</text>
</comment>
<comment type="domain">
    <text evidence="9">The C-type lectin domain mediates dual recognition of both sulfated and mannosylated glycans.</text>
</comment>
<comment type="disease" evidence="5 6">
    <disease id="DI-02857">
        <name>Birbeck granule deficiency</name>
        <acronym>BIRGD</acronym>
        <description>A condition characterized by the absence of Birbeck granules in epidermal Langerhans cells. Despite the lack of Birbeck granules, Langerhans cells are present in normal numbers and have normal morphologic characteristics and antigen-presenting capacity.</description>
        <dbReference type="MIM" id="613393"/>
    </disease>
    <text>The disease is caused by variants affecting the gene represented in this entry.</text>
</comment>
<comment type="online information" name="Functional Glycomics Gateway - Glycan Binding">
    <link uri="http://www.functionalglycomics.org/glycomics/GBPServlet?&amp;operationType=view&amp;cbpId=cbp_hum_Ctlect_00126"/>
    <text>Langerin</text>
</comment>
<keyword id="KW-0002">3D-structure</keyword>
<keyword id="KW-0175">Coiled coil</keyword>
<keyword id="KW-1015">Disulfide bond</keyword>
<keyword id="KW-0325">Glycoprotein</keyword>
<keyword id="KW-0430">Lectin</keyword>
<keyword id="KW-0472">Membrane</keyword>
<keyword id="KW-1267">Proteomics identification</keyword>
<keyword id="KW-1185">Reference proteome</keyword>
<keyword id="KW-0735">Signal-anchor</keyword>
<keyword id="KW-0812">Transmembrane</keyword>
<keyword id="KW-1133">Transmembrane helix</keyword>
<name>CLC4K_HUMAN</name>
<feature type="chain" id="PRO_0000223693" description="C-type lectin domain family 4 member K">
    <location>
        <begin position="1"/>
        <end position="328"/>
    </location>
</feature>
<feature type="topological domain" description="Cytoplasmic" evidence="1">
    <location>
        <begin position="1"/>
        <end position="43"/>
    </location>
</feature>
<feature type="transmembrane region" description="Helical; Signal-anchor for type II membrane protein" evidence="1">
    <location>
        <begin position="44"/>
        <end position="64"/>
    </location>
</feature>
<feature type="topological domain" description="Extracellular" evidence="1">
    <location>
        <begin position="65"/>
        <end position="328"/>
    </location>
</feature>
<feature type="domain" description="C-type lectin" evidence="2">
    <location>
        <begin position="202"/>
        <end position="320"/>
    </location>
</feature>
<feature type="coiled-coil region" evidence="1">
    <location>
        <begin position="145"/>
        <end position="190"/>
    </location>
</feature>
<feature type="glycosylation site" description="N-linked (GlcNAc...) asparagine" evidence="1">
    <location>
        <position position="87"/>
    </location>
</feature>
<feature type="glycosylation site" description="N-linked (GlcNAc...) asparagine" evidence="1">
    <location>
        <position position="113"/>
    </location>
</feature>
<feature type="glycosylation site" description="N-linked (GlcNAc...) asparagine" evidence="1">
    <location>
        <position position="180"/>
    </location>
</feature>
<feature type="disulfide bond" evidence="2 8">
    <location>
        <begin position="223"/>
        <end position="319"/>
    </location>
</feature>
<feature type="disulfide bond" evidence="2 8">
    <location>
        <begin position="295"/>
        <end position="311"/>
    </location>
</feature>
<feature type="sequence variant" id="VAR_054781" description="In dbSNP:rs10489990.">
    <original>A</original>
    <variation>V</variation>
    <location>
        <position position="55"/>
    </location>
</feature>
<feature type="sequence variant" id="VAR_056151" description="In dbSNP:rs17718987.">
    <original>Q</original>
    <variation>E</variation>
    <location>
        <position position="136"/>
    </location>
</feature>
<feature type="sequence variant" id="VAR_054782" description="In dbSNP:rs17006436.">
    <original>P</original>
    <variation>S</variation>
    <location>
        <position position="213"/>
    </location>
</feature>
<feature type="sequence variant" id="VAR_063828" description="In BIRGD; abolishes mannose-binding ability; dbSNP:rs200837270." evidence="5 6">
    <original>W</original>
    <variation>R</variation>
    <location>
        <position position="264"/>
    </location>
</feature>
<feature type="sequence variant" id="VAR_054783" description="No effect on mannose-binding ability; dbSNP:rs741326." evidence="3 6">
    <original>V</original>
    <variation>A</variation>
    <location>
        <position position="278"/>
    </location>
</feature>
<feature type="sequence variant" id="VAR_054784" description="Significant reduction in mannose-binding ability; dbSNP:rs13383830." evidence="6">
    <original>N</original>
    <variation>D</variation>
    <location>
        <position position="288"/>
    </location>
</feature>
<feature type="sequence variant" id="VAR_059448" description="Significant reduction in mannose-binding ability; significant decrease in thermal stability; increased sensitivity of sugar binding to pH change; dbSNP:rs2080391." evidence="6">
    <original>A</original>
    <variation>P</variation>
    <location>
        <position position="300"/>
    </location>
</feature>
<feature type="mutagenesis site" description="Loss of binding to 6'-sulfo-LacNAc and invertase." evidence="9">
    <original>E</original>
    <variation>A</variation>
    <location>
        <position position="285"/>
    </location>
</feature>
<feature type="mutagenesis site" description="Loss of binding to 6'-sulfo-LacNAc and invertase." evidence="9">
    <original>N</original>
    <variation>A</variation>
    <location>
        <position position="287"/>
    </location>
</feature>
<feature type="mutagenesis site" description="Loss of binding to 6'-sulfo-LacNAc." evidence="9">
    <original>K</original>
    <variation>A</variation>
    <location>
        <position position="299"/>
    </location>
</feature>
<feature type="mutagenesis site" description="Loss of binding to 6'-sulfo-LacNAc and 6-sulfo-GlcNAc." evidence="9">
    <original>K</original>
    <variation>A</variation>
    <location>
        <position position="313"/>
    </location>
</feature>
<feature type="helix" evidence="12">
    <location>
        <begin position="191"/>
        <end position="196"/>
    </location>
</feature>
<feature type="strand" evidence="11">
    <location>
        <begin position="200"/>
        <end position="202"/>
    </location>
</feature>
<feature type="strand" evidence="11">
    <location>
        <begin position="205"/>
        <end position="209"/>
    </location>
</feature>
<feature type="helix" evidence="11">
    <location>
        <begin position="216"/>
        <end position="225"/>
    </location>
</feature>
<feature type="helix" evidence="11">
    <location>
        <begin position="236"/>
        <end position="246"/>
    </location>
</feature>
<feature type="strand" evidence="11">
    <location>
        <begin position="251"/>
        <end position="258"/>
    </location>
</feature>
<feature type="turn" evidence="11">
    <location>
        <begin position="259"/>
        <end position="262"/>
    </location>
</feature>
<feature type="strand" evidence="11">
    <location>
        <begin position="263"/>
        <end position="266"/>
    </location>
</feature>
<feature type="helix" evidence="11">
    <location>
        <begin position="274"/>
        <end position="277"/>
    </location>
</feature>
<feature type="helix" evidence="11">
    <location>
        <begin position="278"/>
        <end position="280"/>
    </location>
</feature>
<feature type="helix" evidence="11">
    <location>
        <begin position="289"/>
        <end position="291"/>
    </location>
</feature>
<feature type="strand" evidence="11">
    <location>
        <begin position="295"/>
        <end position="298"/>
    </location>
</feature>
<feature type="strand" evidence="11">
    <location>
        <begin position="300"/>
        <end position="304"/>
    </location>
</feature>
<feature type="strand" evidence="11">
    <location>
        <begin position="306"/>
        <end position="309"/>
    </location>
</feature>
<feature type="strand" evidence="11">
    <location>
        <begin position="315"/>
        <end position="322"/>
    </location>
</feature>
<gene>
    <name type="primary">CD207</name>
    <name type="synonym">CLEC4K</name>
</gene>
<proteinExistence type="evidence at protein level"/>
<accession>Q9UJ71</accession>
<sequence>MTVEKEAPDAHFTVDKQNISLWPREPPPKSGPSLVPGKTPTVRAALICLTLVLVASVLLQAVLYPRFMGTISDVKTNVQLLKGRVDNISTLDSEIKKNSDGMEAAGVQIQMVNESLGYVRSQFLKLKTSVEKANAQIQILTRSWEEVSTLNAQIPELKSDLEKASALNTKIRALQGSLENMSKLLKRQNDILQVVSQGWKYFKGNFYYFSLIPKTWYSAEQFCVSRNSHLTSVTSESEQEFLYKTAGGLIYWIGLTKAGMEGDWSWVDDTPFNKVQSVRFWIPGEPNNAGNNEHCGNIKAPSLQAWNDAPCDKTFLFICKRPYVPSEP</sequence>
<reference key="1">
    <citation type="journal article" date="2000" name="Immunity">
        <title>Langerin, a novel C-type lectin specific to Langerhans cells, is an endocytic receptor that induces the formation of Birbeck granules.</title>
        <authorList>
            <person name="Valladeau J."/>
            <person name="Ravel O."/>
            <person name="Dezutter-Dambuyant C."/>
            <person name="Moore K."/>
            <person name="Kleijmeer M."/>
            <person name="Liu Y."/>
            <person name="Duvert-Frances V."/>
            <person name="Vincent C."/>
            <person name="Schmitt D."/>
            <person name="Davoust J."/>
            <person name="Caux C."/>
            <person name="Lebecque S."/>
            <person name="Saeland S."/>
        </authorList>
    </citation>
    <scope>NUCLEOTIDE SEQUENCE [MRNA]</scope>
    <scope>FUNCTION</scope>
    <scope>SUBCELLULAR LOCATION</scope>
    <scope>TISSUE SPECIFICITY</scope>
    <scope>VARIANT ALA-278</scope>
</reference>
<reference key="2">
    <citation type="journal article" date="2005" name="Nature">
        <title>Generation and annotation of the DNA sequences of human chromosomes 2 and 4.</title>
        <authorList>
            <person name="Hillier L.W."/>
            <person name="Graves T.A."/>
            <person name="Fulton R.S."/>
            <person name="Fulton L.A."/>
            <person name="Pepin K.H."/>
            <person name="Minx P."/>
            <person name="Wagner-McPherson C."/>
            <person name="Layman D."/>
            <person name="Wylie K."/>
            <person name="Sekhon M."/>
            <person name="Becker M.C."/>
            <person name="Fewell G.A."/>
            <person name="Delehaunty K.D."/>
            <person name="Miner T.L."/>
            <person name="Nash W.E."/>
            <person name="Kremitzki C."/>
            <person name="Oddy L."/>
            <person name="Du H."/>
            <person name="Sun H."/>
            <person name="Bradshaw-Cordum H."/>
            <person name="Ali J."/>
            <person name="Carter J."/>
            <person name="Cordes M."/>
            <person name="Harris A."/>
            <person name="Isak A."/>
            <person name="van Brunt A."/>
            <person name="Nguyen C."/>
            <person name="Du F."/>
            <person name="Courtney L."/>
            <person name="Kalicki J."/>
            <person name="Ozersky P."/>
            <person name="Abbott S."/>
            <person name="Armstrong J."/>
            <person name="Belter E.A."/>
            <person name="Caruso L."/>
            <person name="Cedroni M."/>
            <person name="Cotton M."/>
            <person name="Davidson T."/>
            <person name="Desai A."/>
            <person name="Elliott G."/>
            <person name="Erb T."/>
            <person name="Fronick C."/>
            <person name="Gaige T."/>
            <person name="Haakenson W."/>
            <person name="Haglund K."/>
            <person name="Holmes A."/>
            <person name="Harkins R."/>
            <person name="Kim K."/>
            <person name="Kruchowski S.S."/>
            <person name="Strong C.M."/>
            <person name="Grewal N."/>
            <person name="Goyea E."/>
            <person name="Hou S."/>
            <person name="Levy A."/>
            <person name="Martinka S."/>
            <person name="Mead K."/>
            <person name="McLellan M.D."/>
            <person name="Meyer R."/>
            <person name="Randall-Maher J."/>
            <person name="Tomlinson C."/>
            <person name="Dauphin-Kohlberg S."/>
            <person name="Kozlowicz-Reilly A."/>
            <person name="Shah N."/>
            <person name="Swearengen-Shahid S."/>
            <person name="Snider J."/>
            <person name="Strong J.T."/>
            <person name="Thompson J."/>
            <person name="Yoakum M."/>
            <person name="Leonard S."/>
            <person name="Pearman C."/>
            <person name="Trani L."/>
            <person name="Radionenko M."/>
            <person name="Waligorski J.E."/>
            <person name="Wang C."/>
            <person name="Rock S.M."/>
            <person name="Tin-Wollam A.-M."/>
            <person name="Maupin R."/>
            <person name="Latreille P."/>
            <person name="Wendl M.C."/>
            <person name="Yang S.-P."/>
            <person name="Pohl C."/>
            <person name="Wallis J.W."/>
            <person name="Spieth J."/>
            <person name="Bieri T.A."/>
            <person name="Berkowicz N."/>
            <person name="Nelson J.O."/>
            <person name="Osborne J."/>
            <person name="Ding L."/>
            <person name="Meyer R."/>
            <person name="Sabo A."/>
            <person name="Shotland Y."/>
            <person name="Sinha P."/>
            <person name="Wohldmann P.E."/>
            <person name="Cook L.L."/>
            <person name="Hickenbotham M.T."/>
            <person name="Eldred J."/>
            <person name="Williams D."/>
            <person name="Jones T.A."/>
            <person name="She X."/>
            <person name="Ciccarelli F.D."/>
            <person name="Izaurralde E."/>
            <person name="Taylor J."/>
            <person name="Schmutz J."/>
            <person name="Myers R.M."/>
            <person name="Cox D.R."/>
            <person name="Huang X."/>
            <person name="McPherson J.D."/>
            <person name="Mardis E.R."/>
            <person name="Clifton S.W."/>
            <person name="Warren W.C."/>
            <person name="Chinwalla A.T."/>
            <person name="Eddy S.R."/>
            <person name="Marra M.A."/>
            <person name="Ovcharenko I."/>
            <person name="Furey T.S."/>
            <person name="Miller W."/>
            <person name="Eichler E.E."/>
            <person name="Bork P."/>
            <person name="Suyama M."/>
            <person name="Torrents D."/>
            <person name="Waterston R.H."/>
            <person name="Wilson R.K."/>
        </authorList>
    </citation>
    <scope>NUCLEOTIDE SEQUENCE [LARGE SCALE GENOMIC DNA]</scope>
</reference>
<reference key="3">
    <citation type="journal article" date="2004" name="Genome Res.">
        <title>The status, quality, and expansion of the NIH full-length cDNA project: the Mammalian Gene Collection (MGC).</title>
        <authorList>
            <consortium name="The MGC Project Team"/>
        </authorList>
    </citation>
    <scope>NUCLEOTIDE SEQUENCE [LARGE SCALE MRNA]</scope>
    <source>
        <tissue>Lung</tissue>
    </source>
</reference>
<reference key="4">
    <citation type="journal article" date="2003" name="Glycobiology">
        <title>Characterization of carbohydrate recognition by langerin, a C-type lectin of Langerhans cells.</title>
        <authorList>
            <person name="Stambach N.S."/>
            <person name="Taylor M.E."/>
        </authorList>
    </citation>
    <scope>SUBUNIT</scope>
</reference>
<reference key="5">
    <citation type="journal article" date="2003" name="Immunol. Res.">
        <title>Langerin/CD207 sheds light on formation of Birbeck granules and their possible function in Langerhans cells.</title>
        <authorList>
            <person name="Valladeau J."/>
            <person name="Dezutter-Dambuyant C."/>
            <person name="Saeland S."/>
        </authorList>
    </citation>
    <scope>REVIEW</scope>
</reference>
<reference key="6">
    <citation type="journal article" date="2007" name="Nat. Med.">
        <title>Langerin is a natural barrier to HIV-1 transmission by Langerhans cells.</title>
        <authorList>
            <person name="de Witte L."/>
            <person name="Nabatov A."/>
            <person name="Pion M."/>
            <person name="Fluitsma D."/>
            <person name="de Jong M.A."/>
            <person name="de Gruijl T."/>
            <person name="Piguet V."/>
            <person name="van Kooyk Y."/>
            <person name="Geijtenbeek T.B."/>
        </authorList>
    </citation>
    <scope>FUNCTION</scope>
</reference>
<reference key="7">
    <citation type="journal article" date="2009" name="Sci. Signal.">
        <title>Quantitative phosphoproteomic analysis of T cell receptor signaling reveals system-wide modulation of protein-protein interactions.</title>
        <authorList>
            <person name="Mayya V."/>
            <person name="Lundgren D.H."/>
            <person name="Hwang S.-I."/>
            <person name="Rezaul K."/>
            <person name="Wu L."/>
            <person name="Eng J.K."/>
            <person name="Rodionov V."/>
            <person name="Han D.K."/>
        </authorList>
    </citation>
    <scope>IDENTIFICATION BY MASS SPECTROMETRY [LARGE SCALE ANALYSIS]</scope>
    <source>
        <tissue>Leukemic T-cell</tissue>
    </source>
</reference>
<reference key="8">
    <citation type="journal article" date="2010" name="J. Biol. Chem.">
        <title>Dual specificity of langerin to sulfated and mannosylated glycans via a single C-type carbohydrate recognition domain.</title>
        <authorList>
            <person name="Tateno H."/>
            <person name="Ohnishi K."/>
            <person name="Yabe R."/>
            <person name="Hayatsu N."/>
            <person name="Sato T."/>
            <person name="Takeya M."/>
            <person name="Narimatsu H."/>
            <person name="Hirabayashi J."/>
        </authorList>
    </citation>
    <scope>FUNCTION</scope>
    <scope>TISSUE SPECIFICITY</scope>
    <scope>DOMAIN C-TYPE LECTIN</scope>
    <scope>MUTAGENESIS OF GLU-285; ASN-287; LYS-299 AND LYS-313</scope>
</reference>
<reference key="9">
    <citation type="journal article" date="2010" name="Mol. Immunol.">
        <title>C-type lectin Langerin is a beta-glucan receptor on human Langerhans cells that recognizes opportunistic and pathogenic fungi.</title>
        <authorList>
            <person name="de Jong M.A."/>
            <person name="Vriend L.E."/>
            <person name="Theelen B."/>
            <person name="Taylor M.E."/>
            <person name="Fluitsma D."/>
            <person name="Boekhout T."/>
            <person name="Geijtenbeek T.B."/>
        </authorList>
    </citation>
    <scope>FUNCTION</scope>
</reference>
<reference key="10">
    <citation type="journal article" date="2009" name="Biochemistry">
        <title>Structural studies of langerin and Birbeck granule: a macromolecular organization model.</title>
        <authorList>
            <person name="Thepaut M."/>
            <person name="Valladeau J."/>
            <person name="Nurisso A."/>
            <person name="Kahn R."/>
            <person name="Arnou B."/>
            <person name="Vives C."/>
            <person name="Saeland S."/>
            <person name="Ebel C."/>
            <person name="Monnier C."/>
            <person name="Dezutter-Dambuyant C."/>
            <person name="Imberty A."/>
            <person name="Fieschi F."/>
        </authorList>
    </citation>
    <scope>X-RAY CRYSTALLOGRAPHY (1.5 ANGSTROMS) OF 188-328</scope>
    <scope>DISULFIDE BONDS</scope>
</reference>
<reference key="11">
    <citation type="journal article" date="2005" name="J. Invest. Dermatol.">
        <title>A lack of Birbeck granules in Langerhans cells is associated with a naturally occurring point mutation in the human Langerin gene.</title>
        <authorList>
            <person name="Verdijk P."/>
            <person name="Dijkman R."/>
            <person name="Plasmeijer E.I."/>
            <person name="Mulder A.A."/>
            <person name="Zoutman W.H."/>
            <person name="Mieke Mommaas A."/>
            <person name="Tensen C.P."/>
        </authorList>
    </citation>
    <scope>VARIANT BIRGD ARG-264</scope>
</reference>
<reference key="12">
    <citation type="journal article" date="2006" name="J. Biol. Chem.">
        <title>Polymorphisms in human langerin affect stability and sugar binding activity.</title>
        <authorList>
            <person name="Ward E.M."/>
            <person name="Stambach N.S."/>
            <person name="Drickamer K."/>
            <person name="Taylor M.E."/>
        </authorList>
    </citation>
    <scope>VARIANTS ALA-278; ASP-288 AND PRO-300</scope>
    <scope>CHARACTERIZATION OF VARIANT BIRGD ARG-264</scope>
    <scope>CHARACTERIZATION OF VARIANTS ALA-278; ASP-288 AND PRO-300</scope>
</reference>
<protein>
    <recommendedName>
        <fullName>C-type lectin domain family 4 member K</fullName>
    </recommendedName>
    <alternativeName>
        <fullName>Langerin</fullName>
    </alternativeName>
    <cdAntigenName>CD207</cdAntigenName>
</protein>